<accession>Q2JGG1</accession>
<name>HTPG_FRACC</name>
<protein>
    <recommendedName>
        <fullName evidence="1">Chaperone protein HtpG</fullName>
    </recommendedName>
    <alternativeName>
        <fullName evidence="1">Heat shock protein HtpG</fullName>
    </alternativeName>
    <alternativeName>
        <fullName evidence="1">High temperature protein G</fullName>
    </alternativeName>
</protein>
<reference key="1">
    <citation type="journal article" date="2007" name="Genome Res.">
        <title>Genome characteristics of facultatively symbiotic Frankia sp. strains reflect host range and host plant biogeography.</title>
        <authorList>
            <person name="Normand P."/>
            <person name="Lapierre P."/>
            <person name="Tisa L.S."/>
            <person name="Gogarten J.P."/>
            <person name="Alloisio N."/>
            <person name="Bagnarol E."/>
            <person name="Bassi C.A."/>
            <person name="Berry A.M."/>
            <person name="Bickhart D.M."/>
            <person name="Choisne N."/>
            <person name="Couloux A."/>
            <person name="Cournoyer B."/>
            <person name="Cruveiller S."/>
            <person name="Daubin V."/>
            <person name="Demange N."/>
            <person name="Francino M.P."/>
            <person name="Goltsman E."/>
            <person name="Huang Y."/>
            <person name="Kopp O.R."/>
            <person name="Labarre L."/>
            <person name="Lapidus A."/>
            <person name="Lavire C."/>
            <person name="Marechal J."/>
            <person name="Martinez M."/>
            <person name="Mastronunzio J.E."/>
            <person name="Mullin B.C."/>
            <person name="Niemann J."/>
            <person name="Pujic P."/>
            <person name="Rawnsley T."/>
            <person name="Rouy Z."/>
            <person name="Schenowitz C."/>
            <person name="Sellstedt A."/>
            <person name="Tavares F."/>
            <person name="Tomkins J.P."/>
            <person name="Vallenet D."/>
            <person name="Valverde C."/>
            <person name="Wall L.G."/>
            <person name="Wang Y."/>
            <person name="Medigue C."/>
            <person name="Benson D.R."/>
        </authorList>
    </citation>
    <scope>NUCLEOTIDE SEQUENCE [LARGE SCALE GENOMIC DNA]</scope>
    <source>
        <strain>DSM 45818 / CECT 9043 / HFP020203 / CcI3</strain>
    </source>
</reference>
<proteinExistence type="inferred from homology"/>
<comment type="function">
    <text evidence="1">Molecular chaperone. Has ATPase activity.</text>
</comment>
<comment type="subunit">
    <text evidence="1">Homodimer.</text>
</comment>
<comment type="subcellular location">
    <subcellularLocation>
        <location evidence="1">Cytoplasm</location>
    </subcellularLocation>
</comment>
<comment type="similarity">
    <text evidence="1">Belongs to the heat shock protein 90 family.</text>
</comment>
<evidence type="ECO:0000255" key="1">
    <source>
        <dbReference type="HAMAP-Rule" id="MF_00505"/>
    </source>
</evidence>
<evidence type="ECO:0000256" key="2">
    <source>
        <dbReference type="SAM" id="MobiDB-lite"/>
    </source>
</evidence>
<dbReference type="EMBL" id="CP000249">
    <property type="protein sequence ID" value="ABD09631.1"/>
    <property type="molecule type" value="Genomic_DNA"/>
</dbReference>
<dbReference type="RefSeq" id="WP_011434711.1">
    <property type="nucleotide sequence ID" value="NZ_JENI01000004.1"/>
</dbReference>
<dbReference type="SMR" id="Q2JGG1"/>
<dbReference type="STRING" id="106370.Francci3_0243"/>
<dbReference type="KEGG" id="fra:Francci3_0243"/>
<dbReference type="eggNOG" id="COG0326">
    <property type="taxonomic scope" value="Bacteria"/>
</dbReference>
<dbReference type="HOGENOM" id="CLU_006684_3_0_11"/>
<dbReference type="OrthoDB" id="9802640at2"/>
<dbReference type="PhylomeDB" id="Q2JGG1"/>
<dbReference type="Proteomes" id="UP000001937">
    <property type="component" value="Chromosome"/>
</dbReference>
<dbReference type="GO" id="GO:0005737">
    <property type="term" value="C:cytoplasm"/>
    <property type="evidence" value="ECO:0007669"/>
    <property type="project" value="UniProtKB-SubCell"/>
</dbReference>
<dbReference type="GO" id="GO:0005524">
    <property type="term" value="F:ATP binding"/>
    <property type="evidence" value="ECO:0007669"/>
    <property type="project" value="UniProtKB-UniRule"/>
</dbReference>
<dbReference type="GO" id="GO:0016887">
    <property type="term" value="F:ATP hydrolysis activity"/>
    <property type="evidence" value="ECO:0007669"/>
    <property type="project" value="InterPro"/>
</dbReference>
<dbReference type="GO" id="GO:0140662">
    <property type="term" value="F:ATP-dependent protein folding chaperone"/>
    <property type="evidence" value="ECO:0007669"/>
    <property type="project" value="InterPro"/>
</dbReference>
<dbReference type="GO" id="GO:0051082">
    <property type="term" value="F:unfolded protein binding"/>
    <property type="evidence" value="ECO:0007669"/>
    <property type="project" value="UniProtKB-UniRule"/>
</dbReference>
<dbReference type="CDD" id="cd16927">
    <property type="entry name" value="HATPase_Hsp90-like"/>
    <property type="match status" value="1"/>
</dbReference>
<dbReference type="FunFam" id="1.20.120.790:FF:000006">
    <property type="entry name" value="Chaperone protein HtpG"/>
    <property type="match status" value="1"/>
</dbReference>
<dbReference type="FunFam" id="3.30.230.80:FF:000002">
    <property type="entry name" value="Molecular chaperone HtpG"/>
    <property type="match status" value="1"/>
</dbReference>
<dbReference type="FunFam" id="3.30.565.10:FF:000009">
    <property type="entry name" value="Molecular chaperone HtpG"/>
    <property type="match status" value="1"/>
</dbReference>
<dbReference type="Gene3D" id="3.30.230.80">
    <property type="match status" value="1"/>
</dbReference>
<dbReference type="Gene3D" id="3.40.50.11260">
    <property type="match status" value="1"/>
</dbReference>
<dbReference type="Gene3D" id="1.20.120.790">
    <property type="entry name" value="Heat shock protein 90, C-terminal domain"/>
    <property type="match status" value="1"/>
</dbReference>
<dbReference type="Gene3D" id="3.30.565.10">
    <property type="entry name" value="Histidine kinase-like ATPase, C-terminal domain"/>
    <property type="match status" value="1"/>
</dbReference>
<dbReference type="HAMAP" id="MF_00505">
    <property type="entry name" value="HSP90"/>
    <property type="match status" value="1"/>
</dbReference>
<dbReference type="InterPro" id="IPR036890">
    <property type="entry name" value="HATPase_C_sf"/>
</dbReference>
<dbReference type="InterPro" id="IPR019805">
    <property type="entry name" value="Heat_shock_protein_90_CS"/>
</dbReference>
<dbReference type="InterPro" id="IPR037196">
    <property type="entry name" value="HSP90_C"/>
</dbReference>
<dbReference type="InterPro" id="IPR001404">
    <property type="entry name" value="Hsp90_fam"/>
</dbReference>
<dbReference type="InterPro" id="IPR020575">
    <property type="entry name" value="Hsp90_N"/>
</dbReference>
<dbReference type="InterPro" id="IPR020568">
    <property type="entry name" value="Ribosomal_Su5_D2-typ_SF"/>
</dbReference>
<dbReference type="NCBIfam" id="NF003555">
    <property type="entry name" value="PRK05218.1"/>
    <property type="match status" value="1"/>
</dbReference>
<dbReference type="PANTHER" id="PTHR11528">
    <property type="entry name" value="HEAT SHOCK PROTEIN 90 FAMILY MEMBER"/>
    <property type="match status" value="1"/>
</dbReference>
<dbReference type="Pfam" id="PF13589">
    <property type="entry name" value="HATPase_c_3"/>
    <property type="match status" value="1"/>
</dbReference>
<dbReference type="Pfam" id="PF00183">
    <property type="entry name" value="HSP90"/>
    <property type="match status" value="1"/>
</dbReference>
<dbReference type="PIRSF" id="PIRSF002583">
    <property type="entry name" value="Hsp90"/>
    <property type="match status" value="1"/>
</dbReference>
<dbReference type="PRINTS" id="PR00775">
    <property type="entry name" value="HEATSHOCK90"/>
</dbReference>
<dbReference type="SMART" id="SM00387">
    <property type="entry name" value="HATPase_c"/>
    <property type="match status" value="1"/>
</dbReference>
<dbReference type="SUPFAM" id="SSF55874">
    <property type="entry name" value="ATPase domain of HSP90 chaperone/DNA topoisomerase II/histidine kinase"/>
    <property type="match status" value="1"/>
</dbReference>
<dbReference type="SUPFAM" id="SSF110942">
    <property type="entry name" value="HSP90 C-terminal domain"/>
    <property type="match status" value="1"/>
</dbReference>
<dbReference type="SUPFAM" id="SSF54211">
    <property type="entry name" value="Ribosomal protein S5 domain 2-like"/>
    <property type="match status" value="1"/>
</dbReference>
<dbReference type="PROSITE" id="PS00298">
    <property type="entry name" value="HSP90"/>
    <property type="match status" value="1"/>
</dbReference>
<gene>
    <name evidence="1" type="primary">htpG</name>
    <name type="ordered locus">Francci3_0243</name>
</gene>
<organism>
    <name type="scientific">Frankia casuarinae (strain DSM 45818 / CECT 9043 / HFP020203 / CcI3)</name>
    <dbReference type="NCBI Taxonomy" id="106370"/>
    <lineage>
        <taxon>Bacteria</taxon>
        <taxon>Bacillati</taxon>
        <taxon>Actinomycetota</taxon>
        <taxon>Actinomycetes</taxon>
        <taxon>Frankiales</taxon>
        <taxon>Frankiaceae</taxon>
        <taxon>Frankia</taxon>
    </lineage>
</organism>
<keyword id="KW-0067">ATP-binding</keyword>
<keyword id="KW-0143">Chaperone</keyword>
<keyword id="KW-0963">Cytoplasm</keyword>
<keyword id="KW-0547">Nucleotide-binding</keyword>
<keyword id="KW-1185">Reference proteome</keyword>
<keyword id="KW-0346">Stress response</keyword>
<feature type="chain" id="PRO_0000236994" description="Chaperone protein HtpG">
    <location>
        <begin position="1"/>
        <end position="650"/>
    </location>
</feature>
<feature type="region of interest" description="A; substrate-binding" evidence="1">
    <location>
        <begin position="1"/>
        <end position="356"/>
    </location>
</feature>
<feature type="region of interest" description="Disordered" evidence="2">
    <location>
        <begin position="222"/>
        <end position="245"/>
    </location>
</feature>
<feature type="region of interest" description="B" evidence="1">
    <location>
        <begin position="357"/>
        <end position="572"/>
    </location>
</feature>
<feature type="region of interest" description="C" evidence="1">
    <location>
        <begin position="573"/>
        <end position="650"/>
    </location>
</feature>
<sequence length="650" mass="72845">MSTRVETLEFQAEARQLLQLMVHSIYSNKDIFLRELISNASDALDKLRIASLVKDGPRVDSADLRIEIEADVNARTLTVRDNGIGMSRDEVVGLIGTIAKSGTAELLRKLRESEDGAASSDLIGQFGVGFYSTFMVADKVTLLTGKAGESGGTRWESDGAGTYVIETVDDAPRGTAVTVHLKPEDSEDRLYDYTDENKIREIVKRYSDFIAWPIRLVSAPAAKDRDSNDDGTAESGAGAENAGDRPLNSMKALWARPQSEVDKAEYDQFYQHLSHDWTGPLEVIHMKGEGTFEYEALLFIPSRAPLDLFTRDARRGVQLYVKRVFIMDDCAELLPNYLRFVRGVVDTHDLSLNISREILQQDRRIQLVRRRLVKKILASIRALQENDAERYRTLWKEFGAALKEGLLEDADNQDAILGLVSVDSTHDADRPTTLREYIERMKDAQNEIYYLTGDSRGMIENSPHMEAFRAKGYEVLILTDPVDEVWVERVAEFDGKPLKSIAKGEVDLDTDDEKKSSEAEREQLRKDFAALLPWLAAKLEDDVKEVRLSSRLTTSPACLVGDTFDMTPALEKMYRAMGHEMPRPKRILELNPTHALVMGLRAAHERDADSAALGDTAELLYGMALLAEGGELRDPARFTRLLAERLAEAL</sequence>